<dbReference type="EMBL" id="BC097414">
    <property type="protein sequence ID" value="AAH97414.1"/>
    <property type="molecule type" value="mRNA"/>
</dbReference>
<dbReference type="RefSeq" id="NP_001020905.1">
    <property type="nucleotide sequence ID" value="NM_001025734.1"/>
</dbReference>
<dbReference type="RefSeq" id="XP_006237104.1">
    <property type="nucleotide sequence ID" value="XM_006237042.3"/>
</dbReference>
<dbReference type="RefSeq" id="XP_038963760.1">
    <property type="nucleotide sequence ID" value="XM_039107832.2"/>
</dbReference>
<dbReference type="SMR" id="Q4V8F5"/>
<dbReference type="FunCoup" id="Q4V8F5">
    <property type="interactions" value="4521"/>
</dbReference>
<dbReference type="STRING" id="10116.ENSRNOP00000011827"/>
<dbReference type="iPTMnet" id="Q4V8F5"/>
<dbReference type="PhosphoSitePlus" id="Q4V8F5"/>
<dbReference type="PaxDb" id="10116-ENSRNOP00000011827"/>
<dbReference type="Ensembl" id="ENSRNOT00000011827.7">
    <property type="protein sequence ID" value="ENSRNOP00000011827.5"/>
    <property type="gene ID" value="ENSRNOG00000008597.7"/>
</dbReference>
<dbReference type="GeneID" id="362414"/>
<dbReference type="KEGG" id="rno:362414"/>
<dbReference type="UCSC" id="RGD:1564009">
    <property type="organism name" value="rat"/>
</dbReference>
<dbReference type="AGR" id="RGD:1564009"/>
<dbReference type="CTD" id="10474"/>
<dbReference type="RGD" id="1564009">
    <property type="gene designation" value="Tada3"/>
</dbReference>
<dbReference type="eggNOG" id="KOG4191">
    <property type="taxonomic scope" value="Eukaryota"/>
</dbReference>
<dbReference type="GeneTree" id="ENSGT00390000008947"/>
<dbReference type="HOGENOM" id="CLU_038515_0_0_1"/>
<dbReference type="InParanoid" id="Q4V8F5"/>
<dbReference type="OMA" id="TPNKFWA"/>
<dbReference type="OrthoDB" id="1232at2759"/>
<dbReference type="PhylomeDB" id="Q4V8F5"/>
<dbReference type="Reactome" id="R-RNO-5689880">
    <property type="pathway name" value="Ub-specific processing proteases"/>
</dbReference>
<dbReference type="Reactome" id="R-RNO-9772755">
    <property type="pathway name" value="Formation of WDR5-containing histone-modifying complexes"/>
</dbReference>
<dbReference type="PRO" id="PR:Q4V8F5"/>
<dbReference type="Proteomes" id="UP000002494">
    <property type="component" value="Chromosome 4"/>
</dbReference>
<dbReference type="Bgee" id="ENSRNOG00000008597">
    <property type="expression patterns" value="Expressed in heart and 20 other cell types or tissues"/>
</dbReference>
<dbReference type="GO" id="GO:0140672">
    <property type="term" value="C:ATAC complex"/>
    <property type="evidence" value="ECO:0000266"/>
    <property type="project" value="RGD"/>
</dbReference>
<dbReference type="GO" id="GO:0072686">
    <property type="term" value="C:mitotic spindle"/>
    <property type="evidence" value="ECO:0000266"/>
    <property type="project" value="RGD"/>
</dbReference>
<dbReference type="GO" id="GO:0005634">
    <property type="term" value="C:nucleus"/>
    <property type="evidence" value="ECO:0000266"/>
    <property type="project" value="RGD"/>
</dbReference>
<dbReference type="GO" id="GO:0000124">
    <property type="term" value="C:SAGA complex"/>
    <property type="evidence" value="ECO:0000266"/>
    <property type="project" value="RGD"/>
</dbReference>
<dbReference type="GO" id="GO:0033276">
    <property type="term" value="C:transcription factor TFTC complex"/>
    <property type="evidence" value="ECO:0000266"/>
    <property type="project" value="RGD"/>
</dbReference>
<dbReference type="GO" id="GO:0016922">
    <property type="term" value="F:nuclear receptor binding"/>
    <property type="evidence" value="ECO:0000266"/>
    <property type="project" value="RGD"/>
</dbReference>
<dbReference type="GO" id="GO:0019904">
    <property type="term" value="F:protein domain specific binding"/>
    <property type="evidence" value="ECO:0000266"/>
    <property type="project" value="RGD"/>
</dbReference>
<dbReference type="GO" id="GO:0003713">
    <property type="term" value="F:transcription coactivator activity"/>
    <property type="evidence" value="ECO:0000266"/>
    <property type="project" value="RGD"/>
</dbReference>
<dbReference type="GO" id="GO:0006325">
    <property type="term" value="P:chromatin organization"/>
    <property type="evidence" value="ECO:0000266"/>
    <property type="project" value="RGD"/>
</dbReference>
<dbReference type="GO" id="GO:0000278">
    <property type="term" value="P:mitotic cell cycle"/>
    <property type="evidence" value="ECO:0000266"/>
    <property type="project" value="RGD"/>
</dbReference>
<dbReference type="GO" id="GO:0000122">
    <property type="term" value="P:negative regulation of transcription by RNA polymerase II"/>
    <property type="evidence" value="ECO:0000266"/>
    <property type="project" value="RGD"/>
</dbReference>
<dbReference type="GO" id="GO:0045893">
    <property type="term" value="P:positive regulation of DNA-templated transcription"/>
    <property type="evidence" value="ECO:0000266"/>
    <property type="project" value="RGD"/>
</dbReference>
<dbReference type="GO" id="GO:0010628">
    <property type="term" value="P:positive regulation of gene expression"/>
    <property type="evidence" value="ECO:0000266"/>
    <property type="project" value="RGD"/>
</dbReference>
<dbReference type="GO" id="GO:0051726">
    <property type="term" value="P:regulation of cell cycle"/>
    <property type="evidence" value="ECO:0000266"/>
    <property type="project" value="RGD"/>
</dbReference>
<dbReference type="GO" id="GO:0051302">
    <property type="term" value="P:regulation of cell division"/>
    <property type="evidence" value="ECO:0000266"/>
    <property type="project" value="RGD"/>
</dbReference>
<dbReference type="GO" id="GO:0006355">
    <property type="term" value="P:regulation of DNA-templated transcription"/>
    <property type="evidence" value="ECO:0000266"/>
    <property type="project" value="RGD"/>
</dbReference>
<dbReference type="GO" id="GO:0045995">
    <property type="term" value="P:regulation of embryonic development"/>
    <property type="evidence" value="ECO:0000266"/>
    <property type="project" value="RGD"/>
</dbReference>
<dbReference type="GO" id="GO:0031647">
    <property type="term" value="P:regulation of protein stability"/>
    <property type="evidence" value="ECO:0000266"/>
    <property type="project" value="RGD"/>
</dbReference>
<dbReference type="GO" id="GO:0006357">
    <property type="term" value="P:regulation of transcription by RNA polymerase II"/>
    <property type="evidence" value="ECO:0000266"/>
    <property type="project" value="RGD"/>
</dbReference>
<dbReference type="InterPro" id="IPR019340">
    <property type="entry name" value="Histone_AcTrfase_su3"/>
</dbReference>
<dbReference type="PANTHER" id="PTHR13556:SF2">
    <property type="entry name" value="TRANSCRIPTIONAL ADAPTER 3"/>
    <property type="match status" value="1"/>
</dbReference>
<dbReference type="PANTHER" id="PTHR13556">
    <property type="entry name" value="TRANSCRIPTIONAL ADAPTER 3-RELATED"/>
    <property type="match status" value="1"/>
</dbReference>
<dbReference type="Pfam" id="PF10198">
    <property type="entry name" value="Ada3"/>
    <property type="match status" value="1"/>
</dbReference>
<sequence>MSELKDCPLQFHDFKSVDHMKVCPRYTAVLARSEDDGIGIEELDTLQLELETLLSSASRRLRVLEAETQILTDWQDKKGDRRILKLARDHELGAPPKHGKPKKQKLEGKTGHGPGPGPGRPKSKNVQPKIQEYEFTDDPIDVPRIPKNDAPNRFWASVEPYCADITSEEVRTLEELLKPPEDEAEHYKIPPLGKHYSQRWAQEDLLEEQKDGARAAAVADKKKGLIGPLTELDTKDVDALLKKSEAQHEQPEDGCPFGALTQRLLQALVEENIISPMEDSPIPDMSGKESGADGASTSPRNQNKPFSVPHTKSLESRIKEELIAQGLLESEDRPAEDSEDEVLAELRKRQAELKALSAHNRTKKHDLLRLAKEEVSRQELRQRVRMADNEVMDAFRKIMAARQKKRTPTKKEKDQAWKTLKERESILKLLDG</sequence>
<organism>
    <name type="scientific">Rattus norvegicus</name>
    <name type="common">Rat</name>
    <dbReference type="NCBI Taxonomy" id="10116"/>
    <lineage>
        <taxon>Eukaryota</taxon>
        <taxon>Metazoa</taxon>
        <taxon>Chordata</taxon>
        <taxon>Craniata</taxon>
        <taxon>Vertebrata</taxon>
        <taxon>Euteleostomi</taxon>
        <taxon>Mammalia</taxon>
        <taxon>Eutheria</taxon>
        <taxon>Euarchontoglires</taxon>
        <taxon>Glires</taxon>
        <taxon>Rodentia</taxon>
        <taxon>Myomorpha</taxon>
        <taxon>Muroidea</taxon>
        <taxon>Muridae</taxon>
        <taxon>Murinae</taxon>
        <taxon>Rattus</taxon>
    </lineage>
</organism>
<feature type="chain" id="PRO_0000357453" description="Transcriptional adapter 3">
    <location>
        <begin position="1"/>
        <end position="432"/>
    </location>
</feature>
<feature type="region of interest" description="Disordered" evidence="4">
    <location>
        <begin position="87"/>
        <end position="127"/>
    </location>
</feature>
<feature type="region of interest" description="Disordered" evidence="4">
    <location>
        <begin position="272"/>
        <end position="319"/>
    </location>
</feature>
<feature type="coiled-coil region" evidence="3">
    <location>
        <begin position="40"/>
        <end position="69"/>
    </location>
</feature>
<feature type="coiled-coil region" evidence="3">
    <location>
        <begin position="367"/>
        <end position="407"/>
    </location>
</feature>
<feature type="compositionally biased region" description="Polar residues" evidence="4">
    <location>
        <begin position="295"/>
        <end position="305"/>
    </location>
</feature>
<feature type="modified residue" description="Phosphoserine" evidence="2">
    <location>
        <position position="280"/>
    </location>
</feature>
<feature type="modified residue" description="Phosphoserine" evidence="2">
    <location>
        <position position="298"/>
    </location>
</feature>
<feature type="modified residue" description="N6-acetyllysine" evidence="2">
    <location>
        <position position="418"/>
    </location>
</feature>
<feature type="cross-link" description="Glycyl lysine isopeptide (Lys-Gly) (interchain with G-Cter in SUMO2)" evidence="2">
    <location>
        <position position="21"/>
    </location>
</feature>
<feature type="cross-link" description="Glycyl lysine isopeptide (Lys-Gly) (interchain with G-Cter in SUMO2)" evidence="2">
    <location>
        <position position="129"/>
    </location>
</feature>
<accession>Q4V8F5</accession>
<reference key="1">
    <citation type="journal article" date="2004" name="Genome Res.">
        <title>The status, quality, and expansion of the NIH full-length cDNA project: the Mammalian Gene Collection (MGC).</title>
        <authorList>
            <consortium name="The MGC Project Team"/>
        </authorList>
    </citation>
    <scope>NUCLEOTIDE SEQUENCE [LARGE SCALE MRNA]</scope>
    <source>
        <tissue>Testis</tissue>
    </source>
</reference>
<gene>
    <name type="primary">Tada3</name>
    <name type="synonym">Ada3</name>
    <name type="synonym">Tada3l</name>
</gene>
<keyword id="KW-0007">Acetylation</keyword>
<keyword id="KW-0175">Coiled coil</keyword>
<keyword id="KW-1017">Isopeptide bond</keyword>
<keyword id="KW-0539">Nucleus</keyword>
<keyword id="KW-0597">Phosphoprotein</keyword>
<keyword id="KW-1185">Reference proteome</keyword>
<keyword id="KW-0804">Transcription</keyword>
<keyword id="KW-0805">Transcription regulation</keyword>
<keyword id="KW-0832">Ubl conjugation</keyword>
<name>TADA3_RAT</name>
<proteinExistence type="evidence at transcript level"/>
<comment type="function">
    <text evidence="1">Functions as a component of the PCAF complex. The PCAF complex is capable of efficiently acetylating histones in a nucleosomal context. The PCAF complex could be considered as the human version of the yeast SAGA complex. Also known as a coactivator for p53/TP53-dependent transcriptional activation (By similarity). Component of the ATAC complex, a complex with histone acetyltransferase activity on histones H3 and H4 (By similarity).</text>
</comment>
<comment type="subunit">
    <text evidence="1">The PCAF complex is composed of a number of TBP-associated factors (TAFS), such as TAF5, TAF5L, TAF6, TAF6L, TAF9, TAF10 and TAF12, PCAF, and also PCAF-associated factors (PAFs), such as TADA2L/ADA2, TADA3L/ADA3 and SPT3. Interacts directly with TADA2L and PCAF and also with the high-risk HPV oncoprotein E6. Component of the STAGA transcription coactivator-HAT complex, at least composed of SUPT3H, GCN5L2, TAF5L, TAF6L, SUPT7L, TADA3L, TAD1L, TAF10, TAF12, TRRAP and TAF9. Component of the TFTC-HAT complex (By similarity). Component of the ADA2A-containing complex (ATAC), composed of KAT14, KAT2A, TADA2L, TADA3L, ZZ3, MBIP, WDR5, YEATS2, CCDC101 and DR1 (By similarity).</text>
</comment>
<comment type="subcellular location">
    <subcellularLocation>
        <location evidence="1">Nucleus</location>
    </subcellularLocation>
</comment>
<comment type="similarity">
    <text evidence="5">Belongs to the NGG1 family.</text>
</comment>
<protein>
    <recommendedName>
        <fullName>Transcriptional adapter 3</fullName>
    </recommendedName>
    <alternativeName>
        <fullName>ADA3 homolog</fullName>
    </alternativeName>
    <alternativeName>
        <fullName>Transcriptional adapter 3-like</fullName>
        <shortName>ADA3-like protein</shortName>
    </alternativeName>
</protein>
<evidence type="ECO:0000250" key="1"/>
<evidence type="ECO:0000250" key="2">
    <source>
        <dbReference type="UniProtKB" id="O75528"/>
    </source>
</evidence>
<evidence type="ECO:0000255" key="3"/>
<evidence type="ECO:0000256" key="4">
    <source>
        <dbReference type="SAM" id="MobiDB-lite"/>
    </source>
</evidence>
<evidence type="ECO:0000305" key="5"/>